<dbReference type="EC" id="2.1.1.-"/>
<dbReference type="EMBL" id="BA000030">
    <property type="protein sequence ID" value="BAC68184.1"/>
    <property type="molecule type" value="Genomic_DNA"/>
</dbReference>
<dbReference type="SMR" id="Q82QN1"/>
<dbReference type="KEGG" id="sma:SAVERM_474"/>
<dbReference type="eggNOG" id="COG3315">
    <property type="taxonomic scope" value="Bacteria"/>
</dbReference>
<dbReference type="HOGENOM" id="CLU_056160_2_0_11"/>
<dbReference type="OrthoDB" id="9806164at2"/>
<dbReference type="Proteomes" id="UP000000428">
    <property type="component" value="Chromosome"/>
</dbReference>
<dbReference type="GO" id="GO:0008168">
    <property type="term" value="F:methyltransferase activity"/>
    <property type="evidence" value="ECO:0007669"/>
    <property type="project" value="UniProtKB-KW"/>
</dbReference>
<dbReference type="GO" id="GO:0032259">
    <property type="term" value="P:methylation"/>
    <property type="evidence" value="ECO:0007669"/>
    <property type="project" value="UniProtKB-KW"/>
</dbReference>
<dbReference type="Gene3D" id="3.40.50.150">
    <property type="entry name" value="Vaccinia Virus protein VP39"/>
    <property type="match status" value="1"/>
</dbReference>
<dbReference type="InterPro" id="IPR007213">
    <property type="entry name" value="Ppm1/Ppm2/Tcmp"/>
</dbReference>
<dbReference type="InterPro" id="IPR029063">
    <property type="entry name" value="SAM-dependent_MTases_sf"/>
</dbReference>
<dbReference type="InterPro" id="IPR011610">
    <property type="entry name" value="SAM_mthyl_Trfase_ML2640-like"/>
</dbReference>
<dbReference type="NCBIfam" id="TIGR00027">
    <property type="entry name" value="mthyl_TIGR00027"/>
    <property type="match status" value="1"/>
</dbReference>
<dbReference type="PANTHER" id="PTHR43619">
    <property type="entry name" value="S-ADENOSYL-L-METHIONINE-DEPENDENT METHYLTRANSFERASE YKTD-RELATED"/>
    <property type="match status" value="1"/>
</dbReference>
<dbReference type="PANTHER" id="PTHR43619:SF2">
    <property type="entry name" value="S-ADENOSYL-L-METHIONINE-DEPENDENT METHYLTRANSFERASES SUPERFAMILY PROTEIN"/>
    <property type="match status" value="1"/>
</dbReference>
<dbReference type="Pfam" id="PF04072">
    <property type="entry name" value="LCM"/>
    <property type="match status" value="1"/>
</dbReference>
<dbReference type="SUPFAM" id="SSF53335">
    <property type="entry name" value="S-adenosyl-L-methionine-dependent methyltransferases"/>
    <property type="match status" value="1"/>
</dbReference>
<keyword id="KW-0489">Methyltransferase</keyword>
<keyword id="KW-1185">Reference proteome</keyword>
<keyword id="KW-0949">S-adenosyl-L-methionine</keyword>
<keyword id="KW-0808">Transferase</keyword>
<evidence type="ECO:0000250" key="1"/>
<evidence type="ECO:0000256" key="2">
    <source>
        <dbReference type="SAM" id="MobiDB-lite"/>
    </source>
</evidence>
<evidence type="ECO:0000305" key="3"/>
<sequence>MTDEQERVQPSGVWATAVGVARVRALETERENALFRDPLAQAFATAGGLWPSSPPLPDDEAARRRRLTVSFSIVIRTKFLDDLLQQASASGVRQVVLLGAGMDSRAFRMDWPEGTRLFEVDTAAPLDFKASVLRQERADARCERITVAVDLREDWPGALAAVGHDPAVPTVWIAEGLLIYLPEDAVELLLARISAQSAAGSRMGLTLGSRGVIERFGADAAPGSAASMWVSEMPDDPVGWLAGHGWEADSHTLRERAAAYGRPISTPPQREERPGGLISAVRR</sequence>
<reference key="1">
    <citation type="journal article" date="2001" name="Proc. Natl. Acad. Sci. U.S.A.">
        <title>Genome sequence of an industrial microorganism Streptomyces avermitilis: deducing the ability of producing secondary metabolites.</title>
        <authorList>
            <person name="Omura S."/>
            <person name="Ikeda H."/>
            <person name="Ishikawa J."/>
            <person name="Hanamoto A."/>
            <person name="Takahashi C."/>
            <person name="Shinose M."/>
            <person name="Takahashi Y."/>
            <person name="Horikawa H."/>
            <person name="Nakazawa H."/>
            <person name="Osonoe T."/>
            <person name="Kikuchi H."/>
            <person name="Shiba T."/>
            <person name="Sakaki Y."/>
            <person name="Hattori M."/>
        </authorList>
    </citation>
    <scope>NUCLEOTIDE SEQUENCE [LARGE SCALE GENOMIC DNA]</scope>
    <source>
        <strain>ATCC 31267 / DSM 46492 / JCM 5070 / NBRC 14893 / NCIMB 12804 / NRRL 8165 / MA-4680</strain>
    </source>
</reference>
<reference key="2">
    <citation type="journal article" date="2003" name="Nat. Biotechnol.">
        <title>Complete genome sequence and comparative analysis of the industrial microorganism Streptomyces avermitilis.</title>
        <authorList>
            <person name="Ikeda H."/>
            <person name="Ishikawa J."/>
            <person name="Hanamoto A."/>
            <person name="Shinose M."/>
            <person name="Kikuchi H."/>
            <person name="Shiba T."/>
            <person name="Sakaki Y."/>
            <person name="Hattori M."/>
            <person name="Omura S."/>
        </authorList>
    </citation>
    <scope>NUCLEOTIDE SEQUENCE [LARGE SCALE GENOMIC DNA]</scope>
    <source>
        <strain>ATCC 31267 / DSM 46492 / JCM 5070 / NBRC 14893 / NCIMB 12804 / NRRL 8165 / MA-4680</strain>
    </source>
</reference>
<organism>
    <name type="scientific">Streptomyces avermitilis (strain ATCC 31267 / DSM 46492 / JCM 5070 / NBRC 14893 / NCIMB 12804 / NRRL 8165 / MA-4680)</name>
    <dbReference type="NCBI Taxonomy" id="227882"/>
    <lineage>
        <taxon>Bacteria</taxon>
        <taxon>Bacillati</taxon>
        <taxon>Actinomycetota</taxon>
        <taxon>Actinomycetes</taxon>
        <taxon>Kitasatosporales</taxon>
        <taxon>Streptomycetaceae</taxon>
        <taxon>Streptomyces</taxon>
    </lineage>
</organism>
<feature type="chain" id="PRO_0000361264" description="Putative S-adenosyl-L-methionine-dependent methyltransferase SAV_474/SAV474">
    <location>
        <begin position="1"/>
        <end position="283"/>
    </location>
</feature>
<feature type="region of interest" description="Disordered" evidence="2">
    <location>
        <begin position="258"/>
        <end position="283"/>
    </location>
</feature>
<feature type="binding site" evidence="1">
    <location>
        <position position="121"/>
    </location>
    <ligand>
        <name>S-adenosyl-L-methionine</name>
        <dbReference type="ChEBI" id="CHEBI:59789"/>
    </ligand>
</feature>
<feature type="binding site" evidence="1">
    <location>
        <begin position="150"/>
        <end position="151"/>
    </location>
    <ligand>
        <name>S-adenosyl-L-methionine</name>
        <dbReference type="ChEBI" id="CHEBI:59789"/>
    </ligand>
</feature>
<gene>
    <name type="ordered locus">SAV_474</name>
</gene>
<name>Y474_STRAW</name>
<comment type="function">
    <text evidence="1">Exhibits S-adenosyl-L-methionine-dependent methyltransferase activity.</text>
</comment>
<comment type="similarity">
    <text evidence="3">Belongs to the UPF0677 family.</text>
</comment>
<accession>Q82QN1</accession>
<proteinExistence type="inferred from homology"/>
<protein>
    <recommendedName>
        <fullName>Putative S-adenosyl-L-methionine-dependent methyltransferase SAV_474/SAV474</fullName>
        <ecNumber>2.1.1.-</ecNumber>
    </recommendedName>
</protein>